<keyword id="KW-1035">Host cytoplasm</keyword>
<keyword id="KW-0597">Phosphoprotein</keyword>
<keyword id="KW-0946">Virion</keyword>
<sequence length="371" mass="41951">MAAEQRRSTIFDIVSKCIVQSVLRDISINSEYIESKAKQLCYCPASKKESVINGIYNCCESNIEIMDKEQLLKILDNLRCHSAHVCNATDFWRLYNSLKRFTHTTAFFNTCKPTILATLNTLITLILSNKLLYAAEMVEYLENQLDSSNKSMSQELAELLEMKYALINLVQYRILPMIIGEPIIVAGFSGKEPISDYSAEVERLMELPVKTDIVNTTYDFLARKGIDTSNNIAEYIAGLKIEEIEKVEKYLPEVISTIANSNIIKNKKSIFPANINDKQIMECSRMLDTSEKYSKGYKTDGAVTSPLTGNNTITTFIPISASDMQKFTILEYLYIMRVMANNVKKKNEGKNNGGVVMHINSPFKVINLPKC</sequence>
<evidence type="ECO:0000250" key="1"/>
<evidence type="ECO:0000305" key="2"/>
<accession>P68715</accession>
<accession>Q80HW8</accession>
<organismHost>
    <name type="scientific">Homo sapiens</name>
    <name type="common">Human</name>
    <dbReference type="NCBI Taxonomy" id="9606"/>
</organismHost>
<name>G7_VACCA</name>
<reference key="1">
    <citation type="journal article" date="1998" name="Virology">
        <title>The complete genomic sequence of the modified vaccinia Ankara strain: comparison with other orthopoxviruses.</title>
        <authorList>
            <person name="Antoine G."/>
            <person name="Scheiflinger F."/>
            <person name="Dorner F."/>
            <person name="Falkner F.G."/>
        </authorList>
    </citation>
    <scope>NUCLEOTIDE SEQUENCE [LARGE SCALE GENOMIC DNA]</scope>
</reference>
<reference key="2">
    <citation type="submission" date="2004-04" db="EMBL/GenBank/DDBJ databases">
        <authorList>
            <person name="Esposito J.J."/>
            <person name="Frace M."/>
            <person name="Sammons S.A."/>
            <person name="Olsen-Rasmussen M.S."/>
            <person name="Osborne J."/>
            <person name="Khristova M."/>
            <person name="Wohlhueter R.M."/>
        </authorList>
    </citation>
    <scope>NUCLEOTIDE SEQUENCE [LARGE SCALE GENOMIC DNA]</scope>
    <source>
        <strain>Isolate Acambis 3000</strain>
    </source>
</reference>
<organism>
    <name type="scientific">Vaccinia virus (strain Ankara)</name>
    <name type="common">VACV</name>
    <dbReference type="NCBI Taxonomy" id="126794"/>
    <lineage>
        <taxon>Viruses</taxon>
        <taxon>Varidnaviria</taxon>
        <taxon>Bamfordvirae</taxon>
        <taxon>Nucleocytoviricota</taxon>
        <taxon>Pokkesviricetes</taxon>
        <taxon>Chitovirales</taxon>
        <taxon>Poxviridae</taxon>
        <taxon>Chordopoxvirinae</taxon>
        <taxon>Orthopoxvirus</taxon>
        <taxon>Vaccinia virus</taxon>
    </lineage>
</organism>
<feature type="chain" id="PRO_0000099536" description="Assembly protein G7">
    <location>
        <begin position="1"/>
        <end position="371"/>
    </location>
</feature>
<feature type="site" description="Cleavage; by I7 protease" evidence="1">
    <location>
        <begin position="187"/>
        <end position="188"/>
    </location>
</feature>
<feature type="site" description="Cleavage; by I7 protease" evidence="1">
    <location>
        <begin position="238"/>
        <end position="239"/>
    </location>
</feature>
<gene>
    <name type="ordered locus">MVA077L</name>
    <name type="ordered locus">ACAM3000_MVA_077</name>
    <name type="ORF">G7L</name>
</gene>
<protein>
    <recommendedName>
        <fullName>Assembly protein G7</fullName>
    </recommendedName>
</protein>
<proteinExistence type="evidence at transcript level"/>
<dbReference type="EMBL" id="U94848">
    <property type="protein sequence ID" value="AAB96443.1"/>
    <property type="molecule type" value="Genomic_DNA"/>
</dbReference>
<dbReference type="EMBL" id="AY603355">
    <property type="protein sequence ID" value="AAT10475.1"/>
    <property type="molecule type" value="Genomic_DNA"/>
</dbReference>
<dbReference type="RefSeq" id="YP_232967.1">
    <property type="nucleotide sequence ID" value="NC_006998.1"/>
</dbReference>
<dbReference type="DNASU" id="3707541"/>
<dbReference type="GeneID" id="3707541"/>
<dbReference type="KEGG" id="vg:3707541"/>
<dbReference type="Proteomes" id="UP000159908">
    <property type="component" value="Segment"/>
</dbReference>
<dbReference type="Proteomes" id="UP000172909">
    <property type="component" value="Segment"/>
</dbReference>
<dbReference type="GO" id="GO:0030430">
    <property type="term" value="C:host cell cytoplasm"/>
    <property type="evidence" value="ECO:0007669"/>
    <property type="project" value="UniProtKB-SubCell"/>
</dbReference>
<dbReference type="GO" id="GO:0044423">
    <property type="term" value="C:virion component"/>
    <property type="evidence" value="ECO:0007669"/>
    <property type="project" value="UniProtKB-KW"/>
</dbReference>
<dbReference type="InterPro" id="IPR008787">
    <property type="entry name" value="Poxvirus_G7"/>
</dbReference>
<dbReference type="Pfam" id="PF05503">
    <property type="entry name" value="Pox_G7"/>
    <property type="match status" value="1"/>
</dbReference>
<comment type="function">
    <text evidence="1">Late protein which is a part of a large complex required for early virion morphogenesis. This complex participates in the formation of virosomes and the incorporation of virosomal contents into nascent immature virions (By similarity).</text>
</comment>
<comment type="subunit">
    <text evidence="1">Part of a complex composed of A30, G7, F10 kinase, A15, D2, D3, and J1.</text>
</comment>
<comment type="subcellular location">
    <subcellularLocation>
        <location evidence="1">Host cytoplasm</location>
    </subcellularLocation>
    <subcellularLocation>
        <location evidence="1">Virion</location>
    </subcellularLocation>
    <text evidence="1">Localizes in cytoplasmic virus factories and present in the virion core.</text>
</comment>
<comment type="induction">
    <text>Expressed in the late phase of the viral replicative cycle.</text>
</comment>
<comment type="PTM">
    <text evidence="1">Phosphorylated on serines by F10 kinase, phosphorylation state is regulated by H1 phosphatase.</text>
</comment>
<comment type="PTM">
    <text evidence="1">Undergoes proteolytic processing during morphogenesis, probably required for the transformation of immature virions (IV) into mature virions (MV).</text>
</comment>
<comment type="similarity">
    <text evidence="2">Belongs to the chordopoxvirinae G7 family.</text>
</comment>